<proteinExistence type="inferred from homology"/>
<evidence type="ECO:0000255" key="1">
    <source>
        <dbReference type="HAMAP-Rule" id="MF_01625"/>
    </source>
</evidence>
<accession>B7NR48</accession>
<feature type="chain" id="PRO_1000186125" description="Regulatory ATPase RavA">
    <location>
        <begin position="1"/>
        <end position="498"/>
    </location>
</feature>
<feature type="binding site" evidence="1">
    <location>
        <position position="23"/>
    </location>
    <ligand>
        <name>ADP</name>
        <dbReference type="ChEBI" id="CHEBI:456216"/>
    </ligand>
</feature>
<feature type="binding site" evidence="1">
    <location>
        <position position="49"/>
    </location>
    <ligand>
        <name>ADP</name>
        <dbReference type="ChEBI" id="CHEBI:456216"/>
    </ligand>
</feature>
<feature type="binding site" evidence="1">
    <location>
        <position position="50"/>
    </location>
    <ligand>
        <name>ADP</name>
        <dbReference type="ChEBI" id="CHEBI:456216"/>
    </ligand>
</feature>
<feature type="binding site" evidence="1">
    <location>
        <position position="51"/>
    </location>
    <ligand>
        <name>ADP</name>
        <dbReference type="ChEBI" id="CHEBI:456216"/>
    </ligand>
</feature>
<feature type="binding site" evidence="1">
    <location>
        <position position="52"/>
    </location>
    <ligand>
        <name>ADP</name>
        <dbReference type="ChEBI" id="CHEBI:456216"/>
    </ligand>
</feature>
<feature type="binding site" evidence="1">
    <location>
        <position position="53"/>
    </location>
    <ligand>
        <name>ADP</name>
        <dbReference type="ChEBI" id="CHEBI:456216"/>
    </ligand>
</feature>
<feature type="binding site" evidence="1">
    <location>
        <position position="54"/>
    </location>
    <ligand>
        <name>ADP</name>
        <dbReference type="ChEBI" id="CHEBI:456216"/>
    </ligand>
</feature>
<feature type="binding site" evidence="1">
    <location>
        <position position="196"/>
    </location>
    <ligand>
        <name>ADP</name>
        <dbReference type="ChEBI" id="CHEBI:456216"/>
    </ligand>
</feature>
<gene>
    <name evidence="1" type="primary">ravA</name>
    <name type="ordered locus">ECIAI39_4350</name>
</gene>
<name>RAVA_ECO7I</name>
<organism>
    <name type="scientific">Escherichia coli O7:K1 (strain IAI39 / ExPEC)</name>
    <dbReference type="NCBI Taxonomy" id="585057"/>
    <lineage>
        <taxon>Bacteria</taxon>
        <taxon>Pseudomonadati</taxon>
        <taxon>Pseudomonadota</taxon>
        <taxon>Gammaproteobacteria</taxon>
        <taxon>Enterobacterales</taxon>
        <taxon>Enterobacteriaceae</taxon>
        <taxon>Escherichia</taxon>
    </lineage>
</organism>
<keyword id="KW-0067">ATP-binding</keyword>
<keyword id="KW-0143">Chaperone</keyword>
<keyword id="KW-0963">Cytoplasm</keyword>
<keyword id="KW-0378">Hydrolase</keyword>
<keyword id="KW-0547">Nucleotide-binding</keyword>
<sequence>MAHPHLLAERISRLSSSLEKGLYERSHAIRLCLLAALSGESVFLLGPPGIAKSLIARRLKFAFQNARAFEYLMTRFSTPEEVFGPLSIQALKDEGRYERLTSGYLPEAEIVFLDEIWKAGPAILNTLLTAINERQFRNGAHVEKIPMRLLVAASNELPEADSSLEALYDRMLIRLWLDKVQDKANFRSMLTSQQDENDNPVPASLQVTDEEYERWQKEIGEITLPDHVFELIFMLRQQLDKLPDAPYVSDRRWKKAIRLLQASAFFSGRSAVAPVDLILLKDCLWYDAQSLNLIQQQIDVLMTGHAWQQQGMLTRLGAIVQRHLQLQQQQSDKTALTVIRLGGIFSRRQQYQLPVNVTASTLTLLLQKPLKLHDMEVVHISFERNALEQWLSKGGEIRGKLNGIGFAQKLNLEVDSAQHLVVRDVSLQGSTLALPGSSAEGLPGEIKQQLEELESDWRKQHVLFSEQQKCLFIPGDWLGRIEASLQDVGAQIRQAQQC</sequence>
<comment type="function">
    <text evidence="1">Component of the RavA-ViaA chaperone complex, which may act on the membrane to optimize the function of some of the respiratory chains. RavA functions as an ATPase.</text>
</comment>
<comment type="catalytic activity">
    <reaction evidence="1">
        <text>ATP + H2O = ADP + phosphate + H(+)</text>
        <dbReference type="Rhea" id="RHEA:13065"/>
        <dbReference type="ChEBI" id="CHEBI:15377"/>
        <dbReference type="ChEBI" id="CHEBI:15378"/>
        <dbReference type="ChEBI" id="CHEBI:30616"/>
        <dbReference type="ChEBI" id="CHEBI:43474"/>
        <dbReference type="ChEBI" id="CHEBI:456216"/>
    </reaction>
</comment>
<comment type="activity regulation">
    <text evidence="1">ATPase activity is stimulated by ViaA.</text>
</comment>
<comment type="subunit">
    <text evidence="1">Homohexamer. Interacts with ViaA.</text>
</comment>
<comment type="subcellular location">
    <subcellularLocation>
        <location evidence="1">Cytoplasm</location>
    </subcellularLocation>
</comment>
<comment type="similarity">
    <text evidence="1">Belongs to the RavA family.</text>
</comment>
<reference key="1">
    <citation type="journal article" date="2009" name="PLoS Genet.">
        <title>Organised genome dynamics in the Escherichia coli species results in highly diverse adaptive paths.</title>
        <authorList>
            <person name="Touchon M."/>
            <person name="Hoede C."/>
            <person name="Tenaillon O."/>
            <person name="Barbe V."/>
            <person name="Baeriswyl S."/>
            <person name="Bidet P."/>
            <person name="Bingen E."/>
            <person name="Bonacorsi S."/>
            <person name="Bouchier C."/>
            <person name="Bouvet O."/>
            <person name="Calteau A."/>
            <person name="Chiapello H."/>
            <person name="Clermont O."/>
            <person name="Cruveiller S."/>
            <person name="Danchin A."/>
            <person name="Diard M."/>
            <person name="Dossat C."/>
            <person name="Karoui M.E."/>
            <person name="Frapy E."/>
            <person name="Garry L."/>
            <person name="Ghigo J.M."/>
            <person name="Gilles A.M."/>
            <person name="Johnson J."/>
            <person name="Le Bouguenec C."/>
            <person name="Lescat M."/>
            <person name="Mangenot S."/>
            <person name="Martinez-Jehanne V."/>
            <person name="Matic I."/>
            <person name="Nassif X."/>
            <person name="Oztas S."/>
            <person name="Petit M.A."/>
            <person name="Pichon C."/>
            <person name="Rouy Z."/>
            <person name="Ruf C.S."/>
            <person name="Schneider D."/>
            <person name="Tourret J."/>
            <person name="Vacherie B."/>
            <person name="Vallenet D."/>
            <person name="Medigue C."/>
            <person name="Rocha E.P.C."/>
            <person name="Denamur E."/>
        </authorList>
    </citation>
    <scope>NUCLEOTIDE SEQUENCE [LARGE SCALE GENOMIC DNA]</scope>
    <source>
        <strain>IAI39 / ExPEC</strain>
    </source>
</reference>
<dbReference type="EC" id="3.6.1.-" evidence="1"/>
<dbReference type="EMBL" id="CU928164">
    <property type="protein sequence ID" value="CAR20456.1"/>
    <property type="molecule type" value="Genomic_DNA"/>
</dbReference>
<dbReference type="RefSeq" id="WP_012602621.1">
    <property type="nucleotide sequence ID" value="NC_011750.1"/>
</dbReference>
<dbReference type="RefSeq" id="YP_002410225.1">
    <property type="nucleotide sequence ID" value="NC_011750.1"/>
</dbReference>
<dbReference type="SMR" id="B7NR48"/>
<dbReference type="STRING" id="585057.ECIAI39_4350"/>
<dbReference type="KEGG" id="ect:ECIAI39_4350"/>
<dbReference type="PATRIC" id="fig|585057.6.peg.4496"/>
<dbReference type="HOGENOM" id="CLU_018678_1_0_6"/>
<dbReference type="Proteomes" id="UP000000749">
    <property type="component" value="Chromosome"/>
</dbReference>
<dbReference type="GO" id="GO:0005737">
    <property type="term" value="C:cytoplasm"/>
    <property type="evidence" value="ECO:0007669"/>
    <property type="project" value="UniProtKB-SubCell"/>
</dbReference>
<dbReference type="GO" id="GO:0005524">
    <property type="term" value="F:ATP binding"/>
    <property type="evidence" value="ECO:0007669"/>
    <property type="project" value="UniProtKB-KW"/>
</dbReference>
<dbReference type="GO" id="GO:0016887">
    <property type="term" value="F:ATP hydrolysis activity"/>
    <property type="evidence" value="ECO:0007669"/>
    <property type="project" value="UniProtKB-UniRule"/>
</dbReference>
<dbReference type="CDD" id="cd00009">
    <property type="entry name" value="AAA"/>
    <property type="match status" value="1"/>
</dbReference>
<dbReference type="FunFam" id="3.40.50.300:FF:000410">
    <property type="entry name" value="ATPase RavA"/>
    <property type="match status" value="1"/>
</dbReference>
<dbReference type="Gene3D" id="1.20.58.1510">
    <property type="match status" value="1"/>
</dbReference>
<dbReference type="Gene3D" id="2.40.128.430">
    <property type="match status" value="1"/>
</dbReference>
<dbReference type="Gene3D" id="3.40.50.300">
    <property type="entry name" value="P-loop containing nucleotide triphosphate hydrolases"/>
    <property type="match status" value="1"/>
</dbReference>
<dbReference type="HAMAP" id="MF_01625">
    <property type="entry name" value="ATPase_RavA"/>
    <property type="match status" value="1"/>
</dbReference>
<dbReference type="InterPro" id="IPR003593">
    <property type="entry name" value="AAA+_ATPase"/>
</dbReference>
<dbReference type="InterPro" id="IPR023671">
    <property type="entry name" value="ATPase_RavA"/>
</dbReference>
<dbReference type="InterPro" id="IPR022547">
    <property type="entry name" value="ATPase_RavA_C"/>
</dbReference>
<dbReference type="InterPro" id="IPR045427">
    <property type="entry name" value="MoxR"/>
</dbReference>
<dbReference type="InterPro" id="IPR027417">
    <property type="entry name" value="P-loop_NTPase"/>
</dbReference>
<dbReference type="InterPro" id="IPR041538">
    <property type="entry name" value="RavA-like_AAA_lid"/>
</dbReference>
<dbReference type="InterPro" id="IPR050513">
    <property type="entry name" value="RavA_ATPases"/>
</dbReference>
<dbReference type="InterPro" id="IPR046898">
    <property type="entry name" value="RavA_LARA_dom"/>
</dbReference>
<dbReference type="InterPro" id="IPR046932">
    <property type="entry name" value="RavA_LARA_sf"/>
</dbReference>
<dbReference type="NCBIfam" id="NF010054">
    <property type="entry name" value="PRK13531.1"/>
    <property type="match status" value="1"/>
</dbReference>
<dbReference type="PANTHER" id="PTHR32204">
    <property type="entry name" value="ATPASE RAVA"/>
    <property type="match status" value="1"/>
</dbReference>
<dbReference type="PANTHER" id="PTHR32204:SF0">
    <property type="entry name" value="ATPASE RAVA"/>
    <property type="match status" value="1"/>
</dbReference>
<dbReference type="Pfam" id="PF17868">
    <property type="entry name" value="AAA_lid_8"/>
    <property type="match status" value="1"/>
</dbReference>
<dbReference type="Pfam" id="PF12592">
    <property type="entry name" value="ATPase_RavA_C"/>
    <property type="match status" value="1"/>
</dbReference>
<dbReference type="Pfam" id="PF20030">
    <property type="entry name" value="bpMoxR"/>
    <property type="match status" value="1"/>
</dbReference>
<dbReference type="Pfam" id="PF20265">
    <property type="entry name" value="LARA_dom"/>
    <property type="match status" value="1"/>
</dbReference>
<dbReference type="SMART" id="SM00382">
    <property type="entry name" value="AAA"/>
    <property type="match status" value="1"/>
</dbReference>
<dbReference type="SUPFAM" id="SSF52540">
    <property type="entry name" value="P-loop containing nucleoside triphosphate hydrolases"/>
    <property type="match status" value="1"/>
</dbReference>
<protein>
    <recommendedName>
        <fullName evidence="1">Regulatory ATPase RavA</fullName>
        <ecNumber evidence="1">3.6.1.-</ecNumber>
    </recommendedName>
    <alternativeName>
        <fullName evidence="1">Regulatory ATPase variant A</fullName>
    </alternativeName>
</protein>